<protein>
    <recommendedName>
        <fullName evidence="1">GTPase Era</fullName>
    </recommendedName>
</protein>
<sequence>MGQTSKHKSGFVALVGRPNVGKSTLMNRLIGQKVAITSAKPQTTRNKISGIYTEDDMQVVFVDTPGIFKSHSDLDEYMDKASLSSLKDVDLVMFMVDAKEAGKGEEYVAGLLKDLDIPVFLVINKIDQVHPNELLPIIDSYQAVGKFAEFLPISARQGNGVDDLLKTLKDYLPEGPQYYASDEITDRPEYFVVAEMIREQILRLTDQEVPHSTAVWVDQMNQRINGKLQIDATIFVEKDGQKRIIIGQRGSMIKQIGMRSRKEIENLLGEKVNLKLWVKVRRDWRQDPAFLKSIGYDKKEL</sequence>
<comment type="function">
    <text evidence="1">An essential GTPase that binds both GDP and GTP, with rapid nucleotide exchange. Plays a role in 16S rRNA processing and 30S ribosomal subunit biogenesis and possibly also in cell cycle regulation and energy metabolism.</text>
</comment>
<comment type="subunit">
    <text evidence="1">Monomer.</text>
</comment>
<comment type="subcellular location">
    <subcellularLocation>
        <location>Cytoplasm</location>
    </subcellularLocation>
    <subcellularLocation>
        <location evidence="1">Cell membrane</location>
        <topology evidence="1">Peripheral membrane protein</topology>
    </subcellularLocation>
</comment>
<comment type="similarity">
    <text evidence="1 2">Belongs to the TRAFAC class TrmE-Era-EngA-EngB-Septin-like GTPase superfamily. Era GTPase family.</text>
</comment>
<proteinExistence type="inferred from homology"/>
<keyword id="KW-1003">Cell membrane</keyword>
<keyword id="KW-0963">Cytoplasm</keyword>
<keyword id="KW-0342">GTP-binding</keyword>
<keyword id="KW-0472">Membrane</keyword>
<keyword id="KW-0547">Nucleotide-binding</keyword>
<keyword id="KW-1185">Reference proteome</keyword>
<keyword id="KW-0690">Ribosome biogenesis</keyword>
<keyword id="KW-0694">RNA-binding</keyword>
<keyword id="KW-0699">rRNA-binding</keyword>
<accession>Q1G9W6</accession>
<reference key="1">
    <citation type="journal article" date="2006" name="Proc. Natl. Acad. Sci. U.S.A.">
        <title>The complete genome sequence of Lactobacillus bulgaricus reveals extensive and ongoing reductive evolution.</title>
        <authorList>
            <person name="van de Guchte M."/>
            <person name="Penaud S."/>
            <person name="Grimaldi C."/>
            <person name="Barbe V."/>
            <person name="Bryson K."/>
            <person name="Nicolas P."/>
            <person name="Robert C."/>
            <person name="Oztas S."/>
            <person name="Mangenot S."/>
            <person name="Couloux A."/>
            <person name="Loux V."/>
            <person name="Dervyn R."/>
            <person name="Bossy R."/>
            <person name="Bolotin A."/>
            <person name="Batto J.-M."/>
            <person name="Walunas T."/>
            <person name="Gibrat J.-F."/>
            <person name="Bessieres P."/>
            <person name="Weissenbach J."/>
            <person name="Ehrlich S.D."/>
            <person name="Maguin E."/>
        </authorList>
    </citation>
    <scope>NUCLEOTIDE SEQUENCE [LARGE SCALE GENOMIC DNA]</scope>
    <source>
        <strain>ATCC 11842 / DSM 20081 / BCRC 10696 / JCM 1002 / NBRC 13953 / NCIMB 11778 / NCTC 12712 / WDCM 00102 / Lb 14</strain>
    </source>
</reference>
<gene>
    <name evidence="1" type="primary">era</name>
    <name type="ordered locus">Ldb1251</name>
</gene>
<organism>
    <name type="scientific">Lactobacillus delbrueckii subsp. bulgaricus (strain ATCC 11842 / DSM 20081 / BCRC 10696 / JCM 1002 / NBRC 13953 / NCIMB 11778 / NCTC 12712 / WDCM 00102 / Lb 14)</name>
    <dbReference type="NCBI Taxonomy" id="390333"/>
    <lineage>
        <taxon>Bacteria</taxon>
        <taxon>Bacillati</taxon>
        <taxon>Bacillota</taxon>
        <taxon>Bacilli</taxon>
        <taxon>Lactobacillales</taxon>
        <taxon>Lactobacillaceae</taxon>
        <taxon>Lactobacillus</taxon>
    </lineage>
</organism>
<feature type="chain" id="PRO_1000121336" description="GTPase Era">
    <location>
        <begin position="1"/>
        <end position="301"/>
    </location>
</feature>
<feature type="domain" description="Era-type G" evidence="2">
    <location>
        <begin position="8"/>
        <end position="174"/>
    </location>
</feature>
<feature type="domain" description="KH type-2" evidence="1">
    <location>
        <begin position="197"/>
        <end position="282"/>
    </location>
</feature>
<feature type="region of interest" description="G1" evidence="2">
    <location>
        <begin position="16"/>
        <end position="23"/>
    </location>
</feature>
<feature type="region of interest" description="G2" evidence="2">
    <location>
        <begin position="42"/>
        <end position="46"/>
    </location>
</feature>
<feature type="region of interest" description="G3" evidence="2">
    <location>
        <begin position="63"/>
        <end position="66"/>
    </location>
</feature>
<feature type="region of interest" description="G4" evidence="2">
    <location>
        <begin position="124"/>
        <end position="127"/>
    </location>
</feature>
<feature type="region of interest" description="G5" evidence="2">
    <location>
        <begin position="153"/>
        <end position="155"/>
    </location>
</feature>
<feature type="binding site" evidence="1">
    <location>
        <begin position="16"/>
        <end position="23"/>
    </location>
    <ligand>
        <name>GTP</name>
        <dbReference type="ChEBI" id="CHEBI:37565"/>
    </ligand>
</feature>
<feature type="binding site" evidence="1">
    <location>
        <begin position="63"/>
        <end position="67"/>
    </location>
    <ligand>
        <name>GTP</name>
        <dbReference type="ChEBI" id="CHEBI:37565"/>
    </ligand>
</feature>
<feature type="binding site" evidence="1">
    <location>
        <begin position="124"/>
        <end position="127"/>
    </location>
    <ligand>
        <name>GTP</name>
        <dbReference type="ChEBI" id="CHEBI:37565"/>
    </ligand>
</feature>
<evidence type="ECO:0000255" key="1">
    <source>
        <dbReference type="HAMAP-Rule" id="MF_00367"/>
    </source>
</evidence>
<evidence type="ECO:0000255" key="2">
    <source>
        <dbReference type="PROSITE-ProRule" id="PRU01050"/>
    </source>
</evidence>
<dbReference type="EMBL" id="CR954253">
    <property type="protein sequence ID" value="CAI98053.1"/>
    <property type="molecule type" value="Genomic_DNA"/>
</dbReference>
<dbReference type="RefSeq" id="WP_011543965.1">
    <property type="nucleotide sequence ID" value="NZ_JQAV01000005.1"/>
</dbReference>
<dbReference type="SMR" id="Q1G9W6"/>
<dbReference type="STRING" id="390333.Ldb1251"/>
<dbReference type="KEGG" id="ldb:Ldb1251"/>
<dbReference type="eggNOG" id="COG1159">
    <property type="taxonomic scope" value="Bacteria"/>
</dbReference>
<dbReference type="HOGENOM" id="CLU_038009_1_0_9"/>
<dbReference type="BioCyc" id="LDEL390333:LDB_RS05330-MONOMER"/>
<dbReference type="Proteomes" id="UP000001259">
    <property type="component" value="Chromosome"/>
</dbReference>
<dbReference type="GO" id="GO:0005829">
    <property type="term" value="C:cytosol"/>
    <property type="evidence" value="ECO:0007669"/>
    <property type="project" value="TreeGrafter"/>
</dbReference>
<dbReference type="GO" id="GO:0005886">
    <property type="term" value="C:plasma membrane"/>
    <property type="evidence" value="ECO:0007669"/>
    <property type="project" value="UniProtKB-SubCell"/>
</dbReference>
<dbReference type="GO" id="GO:0005525">
    <property type="term" value="F:GTP binding"/>
    <property type="evidence" value="ECO:0007669"/>
    <property type="project" value="UniProtKB-UniRule"/>
</dbReference>
<dbReference type="GO" id="GO:0003924">
    <property type="term" value="F:GTPase activity"/>
    <property type="evidence" value="ECO:0007669"/>
    <property type="project" value="UniProtKB-UniRule"/>
</dbReference>
<dbReference type="GO" id="GO:0043024">
    <property type="term" value="F:ribosomal small subunit binding"/>
    <property type="evidence" value="ECO:0007669"/>
    <property type="project" value="TreeGrafter"/>
</dbReference>
<dbReference type="GO" id="GO:0070181">
    <property type="term" value="F:small ribosomal subunit rRNA binding"/>
    <property type="evidence" value="ECO:0007669"/>
    <property type="project" value="UniProtKB-UniRule"/>
</dbReference>
<dbReference type="GO" id="GO:0000028">
    <property type="term" value="P:ribosomal small subunit assembly"/>
    <property type="evidence" value="ECO:0007669"/>
    <property type="project" value="TreeGrafter"/>
</dbReference>
<dbReference type="CDD" id="cd04163">
    <property type="entry name" value="Era"/>
    <property type="match status" value="1"/>
</dbReference>
<dbReference type="CDD" id="cd22534">
    <property type="entry name" value="KH-II_Era"/>
    <property type="match status" value="1"/>
</dbReference>
<dbReference type="FunFam" id="3.30.300.20:FF:000003">
    <property type="entry name" value="GTPase Era"/>
    <property type="match status" value="1"/>
</dbReference>
<dbReference type="FunFam" id="3.40.50.300:FF:000094">
    <property type="entry name" value="GTPase Era"/>
    <property type="match status" value="1"/>
</dbReference>
<dbReference type="Gene3D" id="3.30.300.20">
    <property type="match status" value="1"/>
</dbReference>
<dbReference type="Gene3D" id="3.40.50.300">
    <property type="entry name" value="P-loop containing nucleotide triphosphate hydrolases"/>
    <property type="match status" value="1"/>
</dbReference>
<dbReference type="HAMAP" id="MF_00367">
    <property type="entry name" value="GTPase_Era"/>
    <property type="match status" value="1"/>
</dbReference>
<dbReference type="InterPro" id="IPR030388">
    <property type="entry name" value="G_ERA_dom"/>
</dbReference>
<dbReference type="InterPro" id="IPR006073">
    <property type="entry name" value="GTP-bd"/>
</dbReference>
<dbReference type="InterPro" id="IPR005662">
    <property type="entry name" value="GTPase_Era-like"/>
</dbReference>
<dbReference type="InterPro" id="IPR015946">
    <property type="entry name" value="KH_dom-like_a/b"/>
</dbReference>
<dbReference type="InterPro" id="IPR004044">
    <property type="entry name" value="KH_dom_type_2"/>
</dbReference>
<dbReference type="InterPro" id="IPR009019">
    <property type="entry name" value="KH_sf_prok-type"/>
</dbReference>
<dbReference type="InterPro" id="IPR027417">
    <property type="entry name" value="P-loop_NTPase"/>
</dbReference>
<dbReference type="InterPro" id="IPR005225">
    <property type="entry name" value="Small_GTP-bd"/>
</dbReference>
<dbReference type="NCBIfam" id="TIGR00436">
    <property type="entry name" value="era"/>
    <property type="match status" value="1"/>
</dbReference>
<dbReference type="NCBIfam" id="NF000908">
    <property type="entry name" value="PRK00089.1"/>
    <property type="match status" value="1"/>
</dbReference>
<dbReference type="NCBIfam" id="TIGR00231">
    <property type="entry name" value="small_GTP"/>
    <property type="match status" value="1"/>
</dbReference>
<dbReference type="PANTHER" id="PTHR42698">
    <property type="entry name" value="GTPASE ERA"/>
    <property type="match status" value="1"/>
</dbReference>
<dbReference type="PANTHER" id="PTHR42698:SF1">
    <property type="entry name" value="GTPASE ERA, MITOCHONDRIAL"/>
    <property type="match status" value="1"/>
</dbReference>
<dbReference type="Pfam" id="PF07650">
    <property type="entry name" value="KH_2"/>
    <property type="match status" value="1"/>
</dbReference>
<dbReference type="Pfam" id="PF01926">
    <property type="entry name" value="MMR_HSR1"/>
    <property type="match status" value="1"/>
</dbReference>
<dbReference type="PRINTS" id="PR00326">
    <property type="entry name" value="GTP1OBG"/>
</dbReference>
<dbReference type="SUPFAM" id="SSF52540">
    <property type="entry name" value="P-loop containing nucleoside triphosphate hydrolases"/>
    <property type="match status" value="1"/>
</dbReference>
<dbReference type="SUPFAM" id="SSF54814">
    <property type="entry name" value="Prokaryotic type KH domain (KH-domain type II)"/>
    <property type="match status" value="1"/>
</dbReference>
<dbReference type="PROSITE" id="PS51713">
    <property type="entry name" value="G_ERA"/>
    <property type="match status" value="1"/>
</dbReference>
<dbReference type="PROSITE" id="PS50823">
    <property type="entry name" value="KH_TYPE_2"/>
    <property type="match status" value="1"/>
</dbReference>
<name>ERA_LACDA</name>